<sequence length="134" mass="14467">MRSVLTISASLLFGLALSSVAHANDHKILGVIAMPRNETNDLTLKIPVCRIVKRIQLTADHGDIELSGASVYFKTARSASQSLNVPSSIKEGQTTGWININSDNDNKRCVSKITFSGHTVNSSDMARLKVIGDD</sequence>
<reference key="1">
    <citation type="journal article" date="2011" name="J. Bacteriol.">
        <title>Comparative genomics of 28 Salmonella enterica isolates: evidence for CRISPR-mediated adaptive sublineage evolution.</title>
        <authorList>
            <person name="Fricke W.F."/>
            <person name="Mammel M.K."/>
            <person name="McDermott P.F."/>
            <person name="Tartera C."/>
            <person name="White D.G."/>
            <person name="Leclerc J.E."/>
            <person name="Ravel J."/>
            <person name="Cebula T.A."/>
        </authorList>
    </citation>
    <scope>NUCLEOTIDE SEQUENCE [LARGE SCALE GENOMIC DNA]</scope>
    <source>
        <strain>SL254</strain>
    </source>
</reference>
<proteinExistence type="inferred from homology"/>
<organism>
    <name type="scientific">Salmonella newport (strain SL254)</name>
    <dbReference type="NCBI Taxonomy" id="423368"/>
    <lineage>
        <taxon>Bacteria</taxon>
        <taxon>Pseudomonadati</taxon>
        <taxon>Pseudomonadota</taxon>
        <taxon>Gammaproteobacteria</taxon>
        <taxon>Enterobacterales</taxon>
        <taxon>Enterobacteriaceae</taxon>
        <taxon>Salmonella</taxon>
    </lineage>
</organism>
<keyword id="KW-0732">Signal</keyword>
<name>YAAI_SALNS</name>
<evidence type="ECO:0000255" key="1">
    <source>
        <dbReference type="HAMAP-Rule" id="MF_01372"/>
    </source>
</evidence>
<protein>
    <recommendedName>
        <fullName evidence="1">UPF0412 protein YaaI</fullName>
    </recommendedName>
</protein>
<gene>
    <name evidence="1" type="primary">yaaI</name>
    <name type="ordered locus">SNSL254_A0011</name>
</gene>
<comment type="similarity">
    <text evidence="1">Belongs to the UPF0412 family.</text>
</comment>
<dbReference type="EMBL" id="CP001113">
    <property type="protein sequence ID" value="ACF63743.1"/>
    <property type="molecule type" value="Genomic_DNA"/>
</dbReference>
<dbReference type="RefSeq" id="WP_001258090.1">
    <property type="nucleotide sequence ID" value="NZ_CCMR01000003.1"/>
</dbReference>
<dbReference type="KEGG" id="see:SNSL254_A0011"/>
<dbReference type="HOGENOM" id="CLU_158661_0_0_6"/>
<dbReference type="Proteomes" id="UP000008824">
    <property type="component" value="Chromosome"/>
</dbReference>
<dbReference type="HAMAP" id="MF_01372">
    <property type="entry name" value="UPF0412"/>
    <property type="match status" value="1"/>
</dbReference>
<dbReference type="InterPro" id="IPR020240">
    <property type="entry name" value="UPF0412_YaaI"/>
</dbReference>
<dbReference type="NCBIfam" id="NF007541">
    <property type="entry name" value="PRK10154.1"/>
    <property type="match status" value="1"/>
</dbReference>
<dbReference type="Pfam" id="PF10807">
    <property type="entry name" value="DUF2541"/>
    <property type="match status" value="1"/>
</dbReference>
<accession>B4T6D4</accession>
<feature type="signal peptide" evidence="1">
    <location>
        <begin position="1"/>
        <end position="23"/>
    </location>
</feature>
<feature type="chain" id="PRO_1000144744" description="UPF0412 protein YaaI">
    <location>
        <begin position="24"/>
        <end position="134"/>
    </location>
</feature>